<reference key="1">
    <citation type="journal article" date="2008" name="Genome Res.">
        <title>Chlamydia trachomatis: genome sequence analysis of lymphogranuloma venereum isolates.</title>
        <authorList>
            <person name="Thomson N.R."/>
            <person name="Holden M.T.G."/>
            <person name="Carder C."/>
            <person name="Lennard N."/>
            <person name="Lockey S.J."/>
            <person name="Marsh P."/>
            <person name="Skipp P."/>
            <person name="O'Connor C.D."/>
            <person name="Goodhead I."/>
            <person name="Norbertzcak H."/>
            <person name="Harris B."/>
            <person name="Ormond D."/>
            <person name="Rance R."/>
            <person name="Quail M.A."/>
            <person name="Parkhill J."/>
            <person name="Stephens R.S."/>
            <person name="Clarke I.N."/>
        </authorList>
    </citation>
    <scope>NUCLEOTIDE SEQUENCE [LARGE SCALE GENOMIC DNA]</scope>
    <source>
        <strain>UCH-1/proctitis</strain>
    </source>
</reference>
<comment type="function">
    <text evidence="1">Catalyzes the stereoinversion of LL-2,6-diaminopimelate (L,L-DAP) to meso-diaminopimelate (meso-DAP), a precursor of L-lysine and an essential component of the bacterial peptidoglycan.</text>
</comment>
<comment type="catalytic activity">
    <reaction evidence="1">
        <text>(2S,6S)-2,6-diaminopimelate = meso-2,6-diaminopimelate</text>
        <dbReference type="Rhea" id="RHEA:15393"/>
        <dbReference type="ChEBI" id="CHEBI:57609"/>
        <dbReference type="ChEBI" id="CHEBI:57791"/>
        <dbReference type="EC" id="5.1.1.7"/>
    </reaction>
</comment>
<comment type="pathway">
    <text evidence="1">Amino-acid biosynthesis; L-lysine biosynthesis via DAP pathway; DL-2,6-diaminopimelate from LL-2,6-diaminopimelate: step 1/1.</text>
</comment>
<comment type="subunit">
    <text evidence="1">Homodimer.</text>
</comment>
<comment type="subcellular location">
    <subcellularLocation>
        <location evidence="1">Cytoplasm</location>
    </subcellularLocation>
</comment>
<comment type="similarity">
    <text evidence="1">Belongs to the diaminopimelate epimerase family.</text>
</comment>
<accession>B0BC67</accession>
<name>DAPF_CHLTB</name>
<protein>
    <recommendedName>
        <fullName evidence="1">Diaminopimelate epimerase</fullName>
        <shortName evidence="1">DAP epimerase</shortName>
        <ecNumber evidence="1">5.1.1.7</ecNumber>
    </recommendedName>
    <alternativeName>
        <fullName evidence="1">PLP-independent amino acid racemase</fullName>
    </alternativeName>
</protein>
<evidence type="ECO:0000255" key="1">
    <source>
        <dbReference type="HAMAP-Rule" id="MF_00197"/>
    </source>
</evidence>
<gene>
    <name evidence="1" type="primary">dapF</name>
    <name type="ordered locus">CTLon_0685</name>
</gene>
<keyword id="KW-0028">Amino-acid biosynthesis</keyword>
<keyword id="KW-0963">Cytoplasm</keyword>
<keyword id="KW-0413">Isomerase</keyword>
<keyword id="KW-0457">Lysine biosynthesis</keyword>
<organism>
    <name type="scientific">Chlamydia trachomatis serovar L2b (strain UCH-1/proctitis)</name>
    <dbReference type="NCBI Taxonomy" id="471473"/>
    <lineage>
        <taxon>Bacteria</taxon>
        <taxon>Pseudomonadati</taxon>
        <taxon>Chlamydiota</taxon>
        <taxon>Chlamydiia</taxon>
        <taxon>Chlamydiales</taxon>
        <taxon>Chlamydiaceae</taxon>
        <taxon>Chlamydia/Chlamydophila group</taxon>
        <taxon>Chlamydia</taxon>
    </lineage>
</organism>
<dbReference type="EC" id="5.1.1.7" evidence="1"/>
<dbReference type="EMBL" id="AM884177">
    <property type="protein sequence ID" value="CAP07082.1"/>
    <property type="molecule type" value="Genomic_DNA"/>
</dbReference>
<dbReference type="RefSeq" id="WP_009871784.1">
    <property type="nucleotide sequence ID" value="NC_010280.2"/>
</dbReference>
<dbReference type="SMR" id="B0BC67"/>
<dbReference type="KEGG" id="ctl:CTLon_0685"/>
<dbReference type="HOGENOM" id="CLU_053306_3_2_0"/>
<dbReference type="UniPathway" id="UPA00034">
    <property type="reaction ID" value="UER00025"/>
</dbReference>
<dbReference type="Proteomes" id="UP001154401">
    <property type="component" value="Chromosome"/>
</dbReference>
<dbReference type="GO" id="GO:0005829">
    <property type="term" value="C:cytosol"/>
    <property type="evidence" value="ECO:0007669"/>
    <property type="project" value="TreeGrafter"/>
</dbReference>
<dbReference type="GO" id="GO:0008837">
    <property type="term" value="F:diaminopimelate epimerase activity"/>
    <property type="evidence" value="ECO:0007669"/>
    <property type="project" value="UniProtKB-UniRule"/>
</dbReference>
<dbReference type="GO" id="GO:0009089">
    <property type="term" value="P:lysine biosynthetic process via diaminopimelate"/>
    <property type="evidence" value="ECO:0007669"/>
    <property type="project" value="UniProtKB-UniRule"/>
</dbReference>
<dbReference type="FunFam" id="3.10.310.10:FF:000030">
    <property type="entry name" value="Diaminopimelate epimerase"/>
    <property type="match status" value="1"/>
</dbReference>
<dbReference type="Gene3D" id="3.10.310.10">
    <property type="entry name" value="Diaminopimelate Epimerase, Chain A, domain 1"/>
    <property type="match status" value="2"/>
</dbReference>
<dbReference type="HAMAP" id="MF_00197">
    <property type="entry name" value="DAP_epimerase"/>
    <property type="match status" value="1"/>
</dbReference>
<dbReference type="InterPro" id="IPR053407">
    <property type="entry name" value="DAP_Epimerase"/>
</dbReference>
<dbReference type="InterPro" id="IPR018510">
    <property type="entry name" value="DAP_epimerase_AS"/>
</dbReference>
<dbReference type="InterPro" id="IPR001653">
    <property type="entry name" value="DAP_epimerase_DapF"/>
</dbReference>
<dbReference type="NCBIfam" id="NF038284">
    <property type="entry name" value="bifunc_DapF"/>
    <property type="match status" value="1"/>
</dbReference>
<dbReference type="NCBIfam" id="TIGR00652">
    <property type="entry name" value="DapF"/>
    <property type="match status" value="1"/>
</dbReference>
<dbReference type="PANTHER" id="PTHR31689:SF0">
    <property type="entry name" value="DIAMINOPIMELATE EPIMERASE"/>
    <property type="match status" value="1"/>
</dbReference>
<dbReference type="PANTHER" id="PTHR31689">
    <property type="entry name" value="DIAMINOPIMELATE EPIMERASE, CHLOROPLASTIC"/>
    <property type="match status" value="1"/>
</dbReference>
<dbReference type="Pfam" id="PF01678">
    <property type="entry name" value="DAP_epimerase"/>
    <property type="match status" value="2"/>
</dbReference>
<dbReference type="SUPFAM" id="SSF54506">
    <property type="entry name" value="Diaminopimelate epimerase-like"/>
    <property type="match status" value="2"/>
</dbReference>
<dbReference type="PROSITE" id="PS01326">
    <property type="entry name" value="DAP_EPIMERASE"/>
    <property type="match status" value="1"/>
</dbReference>
<feature type="chain" id="PRO_1000099227" description="Diaminopimelate epimerase">
    <location>
        <begin position="1"/>
        <end position="275"/>
    </location>
</feature>
<feature type="active site" description="Proton donor" evidence="1">
    <location>
        <position position="72"/>
    </location>
</feature>
<feature type="active site" description="Proton acceptor" evidence="1">
    <location>
        <position position="207"/>
    </location>
</feature>
<feature type="binding site" evidence="1">
    <location>
        <position position="20"/>
    </location>
    <ligand>
        <name>substrate</name>
    </ligand>
</feature>
<feature type="binding site" evidence="1">
    <location>
        <position position="63"/>
    </location>
    <ligand>
        <name>substrate</name>
    </ligand>
</feature>
<feature type="binding site" evidence="1">
    <location>
        <begin position="73"/>
        <end position="74"/>
    </location>
    <ligand>
        <name>substrate</name>
    </ligand>
</feature>
<feature type="binding site" evidence="1">
    <location>
        <position position="179"/>
    </location>
    <ligand>
        <name>substrate</name>
    </ligand>
</feature>
<feature type="binding site" evidence="1">
    <location>
        <begin position="197"/>
        <end position="198"/>
    </location>
    <ligand>
        <name>substrate</name>
    </ligand>
</feature>
<feature type="binding site" evidence="1">
    <location>
        <begin position="208"/>
        <end position="209"/>
    </location>
    <ligand>
        <name>substrate</name>
    </ligand>
</feature>
<feature type="site" description="Could be important to modulate the pK values of the two catalytic cysteine residues" evidence="1">
    <location>
        <position position="147"/>
    </location>
</feature>
<feature type="site" description="Could be important to modulate the pK values of the two catalytic cysteine residues" evidence="1">
    <location>
        <position position="197"/>
    </location>
</feature>
<proteinExistence type="inferred from homology"/>
<sequence length="275" mass="30576">MGFSSLLTTCRYLLYSGAGNSFILGESMPSLEDVLFLCQEEMVDGFLCVESSEIADAKLTVFNSDGSIASMCGNGLRCAMAHVAQCFGLEDVSIETERGVYQGKFFSMNRVLVDMTLPDWKKAERKLTHVLPGMPEQVFFIDTGVPHVVVFVSDLSKVPVQEWGSFLRYHEDFAPEGVNVDFVQRKKDDLLLVYTYERGCERETLSCGTGMLASALVAADIFSLGQDFSIAVCSRSRNLIKIFSEKGKVFLEGPVSLLNRSENFGWLEPKSRRFG</sequence>